<proteinExistence type="inferred from homology"/>
<sequence length="176" mass="19312">MTAAPADFARARSEFLSIDAPRVEDGAAIWRIARDSQVLDLNSSYSYLLWCRDFAATSAVARGENGEPIAFVTGYVRPDRPQTLVVWQVAVDQAHRGKGLAAALLDALTARVAADQVLSSVETTITPDNTASDRLFTSYAQRHDVALEKEVLFDGELFPEETHLPEVLYRIGPFAT</sequence>
<keyword id="KW-0012">Acyltransferase</keyword>
<keyword id="KW-0808">Transferase</keyword>
<reference key="1">
    <citation type="journal article" date="2004" name="Appl. Environ. Microbiol.">
        <title>Functional expression of the ectoine hydroxylase gene (thpD) from Streptomyces chrysomallus in Halomonas elongata.</title>
        <authorList>
            <person name="Prabhu J."/>
            <person name="Schauwecker F."/>
            <person name="Grammel N."/>
            <person name="Keller U."/>
            <person name="Bernhard M."/>
        </authorList>
    </citation>
    <scope>NUCLEOTIDE SEQUENCE [GENOMIC DNA]</scope>
    <source>
        <strain>ATCC 11523 / DSM 40128 / JCM 4296 / LMG 20459 / NBRC 15393</strain>
    </source>
</reference>
<feature type="chain" id="PRO_0000220091" description="L-2,4-diaminobutyric acid acetyltransferase">
    <location>
        <begin position="1"/>
        <end position="176"/>
    </location>
</feature>
<feature type="domain" description="N-acetyltransferase" evidence="2">
    <location>
        <begin position="16"/>
        <end position="171"/>
    </location>
</feature>
<accession>Q6QUZ0</accession>
<evidence type="ECO:0000250" key="1"/>
<evidence type="ECO:0000255" key="2">
    <source>
        <dbReference type="PROSITE-ProRule" id="PRU00532"/>
    </source>
</evidence>
<evidence type="ECO:0000305" key="3"/>
<name>ECTA_STRAQ</name>
<gene>
    <name type="primary">ectA</name>
    <name type="synonym">thpA</name>
</gene>
<comment type="function">
    <text evidence="1">Catalyzes the acetylation of L-2,4-diaminobutyrate (DABA) to gamma-N-acetyl-alpha,gamma-diaminobutyric acid (ADABA) with acetyl coenzyme A.</text>
</comment>
<comment type="catalytic activity">
    <reaction>
        <text>L-2,4-diaminobutanoate + acetyl-CoA = (2S)-4-acetamido-2-aminobutanoate + CoA + H(+)</text>
        <dbReference type="Rhea" id="RHEA:16901"/>
        <dbReference type="ChEBI" id="CHEBI:15378"/>
        <dbReference type="ChEBI" id="CHEBI:57287"/>
        <dbReference type="ChEBI" id="CHEBI:57288"/>
        <dbReference type="ChEBI" id="CHEBI:58761"/>
        <dbReference type="ChEBI" id="CHEBI:58929"/>
        <dbReference type="EC" id="2.3.1.178"/>
    </reaction>
</comment>
<comment type="pathway">
    <text>Amine and polyamine biosynthesis; ectoine biosynthesis; L-ectoine from L-aspartate 4-semialdehyde: step 2/3.</text>
</comment>
<comment type="similarity">
    <text evidence="3">Belongs to the acetyltransferase family. EctA subfamily.</text>
</comment>
<organism>
    <name type="scientific">Streptomyces anulatus</name>
    <name type="common">Streptomyces chrysomallus</name>
    <dbReference type="NCBI Taxonomy" id="1892"/>
    <lineage>
        <taxon>Bacteria</taxon>
        <taxon>Bacillati</taxon>
        <taxon>Actinomycetota</taxon>
        <taxon>Actinomycetes</taxon>
        <taxon>Kitasatosporales</taxon>
        <taxon>Streptomycetaceae</taxon>
        <taxon>Streptomyces</taxon>
    </lineage>
</organism>
<protein>
    <recommendedName>
        <fullName>L-2,4-diaminobutyric acid acetyltransferase</fullName>
        <shortName>DABA acetyltransferase</shortName>
        <ecNumber>2.3.1.178</ecNumber>
    </recommendedName>
</protein>
<dbReference type="EC" id="2.3.1.178"/>
<dbReference type="EMBL" id="AY524544">
    <property type="protein sequence ID" value="AAS02094.1"/>
    <property type="molecule type" value="Genomic_DNA"/>
</dbReference>
<dbReference type="RefSeq" id="WP_057661885.1">
    <property type="nucleotide sequence ID" value="NZ_CM003601.1"/>
</dbReference>
<dbReference type="SMR" id="Q6QUZ0"/>
<dbReference type="GeneID" id="65909291"/>
<dbReference type="UniPathway" id="UPA00067">
    <property type="reaction ID" value="UER00122"/>
</dbReference>
<dbReference type="GO" id="GO:0033816">
    <property type="term" value="F:diaminobutyrate acetyltransferase activity"/>
    <property type="evidence" value="ECO:0007669"/>
    <property type="project" value="UniProtKB-EC"/>
</dbReference>
<dbReference type="GO" id="GO:0019491">
    <property type="term" value="P:ectoine biosynthetic process"/>
    <property type="evidence" value="ECO:0007669"/>
    <property type="project" value="UniProtKB-UniPathway"/>
</dbReference>
<dbReference type="CDD" id="cd04301">
    <property type="entry name" value="NAT_SF"/>
    <property type="match status" value="1"/>
</dbReference>
<dbReference type="Gene3D" id="3.40.630.30">
    <property type="match status" value="1"/>
</dbReference>
<dbReference type="InterPro" id="IPR016181">
    <property type="entry name" value="Acyl_CoA_acyltransferase"/>
</dbReference>
<dbReference type="InterPro" id="IPR012772">
    <property type="entry name" value="Ectoine_EctA"/>
</dbReference>
<dbReference type="InterPro" id="IPR000182">
    <property type="entry name" value="GNAT_dom"/>
</dbReference>
<dbReference type="NCBIfam" id="TIGR02406">
    <property type="entry name" value="ectoine_EctA"/>
    <property type="match status" value="1"/>
</dbReference>
<dbReference type="Pfam" id="PF00583">
    <property type="entry name" value="Acetyltransf_1"/>
    <property type="match status" value="1"/>
</dbReference>
<dbReference type="SUPFAM" id="SSF55729">
    <property type="entry name" value="Acyl-CoA N-acyltransferases (Nat)"/>
    <property type="match status" value="1"/>
</dbReference>
<dbReference type="PROSITE" id="PS51186">
    <property type="entry name" value="GNAT"/>
    <property type="match status" value="1"/>
</dbReference>